<feature type="chain" id="PRO_0000207917" description="Protein PsbN">
    <location>
        <begin position="1"/>
        <end position="43"/>
    </location>
</feature>
<feature type="transmembrane region" description="Helical" evidence="1">
    <location>
        <begin position="5"/>
        <end position="27"/>
    </location>
</feature>
<evidence type="ECO:0000255" key="1">
    <source>
        <dbReference type="HAMAP-Rule" id="MF_00293"/>
    </source>
</evidence>
<dbReference type="EMBL" id="AF509934">
    <property type="protein sequence ID" value="AAP46321.1"/>
    <property type="molecule type" value="Genomic_DNA"/>
</dbReference>
<dbReference type="SMR" id="Q7YN54"/>
<dbReference type="GO" id="GO:0009535">
    <property type="term" value="C:chloroplast thylakoid membrane"/>
    <property type="evidence" value="ECO:0007669"/>
    <property type="project" value="UniProtKB-SubCell"/>
</dbReference>
<dbReference type="GO" id="GO:0015979">
    <property type="term" value="P:photosynthesis"/>
    <property type="evidence" value="ECO:0007669"/>
    <property type="project" value="InterPro"/>
</dbReference>
<dbReference type="HAMAP" id="MF_00293">
    <property type="entry name" value="PSII_PsbN"/>
    <property type="match status" value="1"/>
</dbReference>
<dbReference type="InterPro" id="IPR003398">
    <property type="entry name" value="PSII_PsbN"/>
</dbReference>
<dbReference type="PANTHER" id="PTHR35326">
    <property type="entry name" value="PROTEIN PSBN"/>
    <property type="match status" value="1"/>
</dbReference>
<dbReference type="PANTHER" id="PTHR35326:SF3">
    <property type="entry name" value="PROTEIN PSBN"/>
    <property type="match status" value="1"/>
</dbReference>
<dbReference type="Pfam" id="PF02468">
    <property type="entry name" value="PsbN"/>
    <property type="match status" value="1"/>
</dbReference>
<comment type="function">
    <text evidence="1">May play a role in photosystem I and II biogenesis.</text>
</comment>
<comment type="subcellular location">
    <subcellularLocation>
        <location evidence="1">Plastid</location>
        <location evidence="1">Chloroplast thylakoid membrane</location>
        <topology evidence="1">Single-pass membrane protein</topology>
    </subcellularLocation>
</comment>
<comment type="similarity">
    <text evidence="1">Belongs to the PsbN family.</text>
</comment>
<comment type="caution">
    <text evidence="1">Originally thought to be a component of PSII; based on experiments in Synechocystis, N.tabacum and barley, and its absence from PSII in T.elongatus and T.vulcanus, this is probably not true.</text>
</comment>
<keyword id="KW-0150">Chloroplast</keyword>
<keyword id="KW-0472">Membrane</keyword>
<keyword id="KW-0934">Plastid</keyword>
<keyword id="KW-0793">Thylakoid</keyword>
<keyword id="KW-0812">Transmembrane</keyword>
<keyword id="KW-1133">Transmembrane helix</keyword>
<reference key="1">
    <citation type="submission" date="2002-05" db="EMBL/GenBank/DDBJ databases">
        <title>Evolution of the Meteoriaceae.</title>
        <authorList>
            <person name="Quandt D."/>
        </authorList>
    </citation>
    <scope>NUCLEOTIDE SEQUENCE [GENOMIC DNA]</scope>
</reference>
<name>PSBN_LOPCO</name>
<sequence>METATLIAIFISCSLVSFTGYALYTAFGQPSKELRDPFEEHED</sequence>
<protein>
    <recommendedName>
        <fullName evidence="1">Protein PsbN</fullName>
    </recommendedName>
</protein>
<accession>Q7YN54</accession>
<geneLocation type="chloroplast"/>
<organism>
    <name type="scientific">Lopidium concinnum</name>
    <name type="common">Moss</name>
    <name type="synonym">Leskea concinna</name>
    <dbReference type="NCBI Taxonomy" id="69843"/>
    <lineage>
        <taxon>Eukaryota</taxon>
        <taxon>Viridiplantae</taxon>
        <taxon>Streptophyta</taxon>
        <taxon>Embryophyta</taxon>
        <taxon>Bryophyta</taxon>
        <taxon>Bryophytina</taxon>
        <taxon>Bryopsida</taxon>
        <taxon>Bryidae</taxon>
        <taxon>Hypnanae</taxon>
        <taxon>Hookeriales</taxon>
        <taxon>Hypopterygiaceae</taxon>
        <taxon>Lopidium</taxon>
    </lineage>
</organism>
<gene>
    <name evidence="1" type="primary">psbN</name>
</gene>
<proteinExistence type="inferred from homology"/>